<comment type="function">
    <text evidence="1 3 4 6">Can function as a Delta(6) fatty acid desaturase. Introduces a double bond in the fatty acid chain 6 carbons away from carboxy terminal to biosynthesize polyunsaturated fatty acids (PUFAs) endogenously (PUFAs are essential for membrane structure and many cellular and physiological processes). Acts on a variety of substrates such as linoleoyl-CoA ((9Z,12Z)-octadecadienoyl-CoA, C18:2n-6) and alpha-linolenoyl-CoA ((9Z,12Z,15Z)-octadecatrienoyl-CoA, C18:3n-3) to produce gamma-linolenoyl-CoA ((6Z,9Z,12Z)-octadecatrienoyl-CoA, C18:3n-6) and (6Z,9Z,12Z,15Z)-octadecatetraenoyl-CoA (18:4n-3) respectively (PubMed:11972048, PubMed:9480865). Unlike plants, Caenorhabditis elegans desaturases seem to use fatty acyl-CoAs as substrates (By similarity). Plays a role in synaptic vesicle recycling by regulating synaptojanin unc-26 localization at synapses (PubMed:18094048).</text>
</comment>
<comment type="catalytic activity">
    <reaction evidence="3 6">
        <text>(9Z,12Z)-octadecadienoyl-CoA + 2 Fe(II)-[cytochrome b5] + O2 + 2 H(+) = (6Z,9Z,12Z)-octadecatrienoyl-CoA + 2 Fe(III)-[cytochrome b5] + 2 H2O</text>
        <dbReference type="Rhea" id="RHEA:47140"/>
        <dbReference type="Rhea" id="RHEA-COMP:10438"/>
        <dbReference type="Rhea" id="RHEA-COMP:10439"/>
        <dbReference type="ChEBI" id="CHEBI:15377"/>
        <dbReference type="ChEBI" id="CHEBI:15378"/>
        <dbReference type="ChEBI" id="CHEBI:15379"/>
        <dbReference type="ChEBI" id="CHEBI:29033"/>
        <dbReference type="ChEBI" id="CHEBI:29034"/>
        <dbReference type="ChEBI" id="CHEBI:57363"/>
        <dbReference type="ChEBI" id="CHEBI:57383"/>
        <dbReference type="EC" id="1.14.19.3"/>
    </reaction>
    <physiologicalReaction direction="left-to-right" evidence="3">
        <dbReference type="Rhea" id="RHEA:47141"/>
    </physiologicalReaction>
</comment>
<comment type="catalytic activity">
    <reaction evidence="3">
        <text>(9Z,12Z,15Z)-octadecatrienoyl-CoA + 2 Fe(II)-[cytochrome b5] + O2 + 2 H(+) = (6Z,9Z,12Z,15Z)-octadecatetraenoyl-CoA + 2 Fe(III)-[cytochrome b5] + 2 H2O</text>
        <dbReference type="Rhea" id="RHEA:47144"/>
        <dbReference type="Rhea" id="RHEA-COMP:10438"/>
        <dbReference type="Rhea" id="RHEA-COMP:10439"/>
        <dbReference type="ChEBI" id="CHEBI:15377"/>
        <dbReference type="ChEBI" id="CHEBI:15378"/>
        <dbReference type="ChEBI" id="CHEBI:15379"/>
        <dbReference type="ChEBI" id="CHEBI:29033"/>
        <dbReference type="ChEBI" id="CHEBI:29034"/>
        <dbReference type="ChEBI" id="CHEBI:71489"/>
        <dbReference type="ChEBI" id="CHEBI:74034"/>
        <dbReference type="EC" id="1.14.19.3"/>
    </reaction>
    <physiologicalReaction direction="left-to-right" evidence="3">
        <dbReference type="Rhea" id="RHEA:47145"/>
    </physiologicalReaction>
</comment>
<comment type="pathway">
    <text evidence="3 6">Lipid metabolism; polyunsaturated fatty acid biosynthesis.</text>
</comment>
<comment type="subcellular location">
    <subcellularLocation>
        <location evidence="10">Membrane</location>
        <topology evidence="10">Multi-pass membrane protein</topology>
    </subcellularLocation>
</comment>
<comment type="alternative products">
    <event type="alternative splicing"/>
    <isoform>
        <id>Q23221-1</id>
        <name>a</name>
        <sequence type="displayed"/>
    </isoform>
    <isoform>
        <id>Q23221-2</id>
        <name>b</name>
        <sequence type="described" ref="VSP_047787"/>
    </isoform>
    <isoform>
        <id>Q23221-3</id>
        <name>c</name>
        <sequence type="described" ref="VSP_047786"/>
    </isoform>
</comment>
<comment type="disruption phenotype">
    <text evidence="3 4">The fat-3 mutants lack detectable Delta6-unsaturated fatty acids and have decreased C20 fatty acids levels, these animals require an additional day of development before commencing egg laying (PubMed:11972048). Impaired synaptic vesicle (SV) recycling characterized by the presence of enlarged SV and the formation of abnormal endocytic membrane-bound structures at synapses. The number of SVs is reduced by 37 percent although SV production in neuron cell body and their transport to release sites are normal (PubMed:18094048).</text>
</comment>
<comment type="miscellaneous">
    <text evidence="5">HPO-19 and T05H4.4 are cytochrome b5 reductases required for PUFA desaturation in Caenorhabditis elegans. HPO-19 and T05H4.4 knockdown or mutation alter FAT-3 desaturase activity.</text>
</comment>
<comment type="similarity">
    <text evidence="10">Belongs to the fatty acid desaturase type 1 family.</text>
</comment>
<proteinExistence type="evidence at protein level"/>
<evidence type="ECO:0000250" key="1">
    <source>
        <dbReference type="UniProtKB" id="G5EGA5"/>
    </source>
</evidence>
<evidence type="ECO:0000255" key="2"/>
<evidence type="ECO:0000269" key="3">
    <source>
    </source>
</evidence>
<evidence type="ECO:0000269" key="4">
    <source>
    </source>
</evidence>
<evidence type="ECO:0000269" key="5">
    <source>
    </source>
</evidence>
<evidence type="ECO:0000269" key="6">
    <source>
    </source>
</evidence>
<evidence type="ECO:0000303" key="7">
    <source>
    </source>
</evidence>
<evidence type="ECO:0000303" key="8">
    <source>
    </source>
</evidence>
<evidence type="ECO:0000303" key="9">
    <source>
    </source>
</evidence>
<evidence type="ECO:0000305" key="10"/>
<feature type="chain" id="PRO_0000423385" description="Delta(6)-fatty-acid desaturase fat-3">
    <location>
        <begin position="1"/>
        <end position="443"/>
    </location>
</feature>
<feature type="transmembrane region" description="Helical" evidence="2">
    <location>
        <begin position="136"/>
        <end position="156"/>
    </location>
</feature>
<feature type="transmembrane region" description="Helical" evidence="2">
    <location>
        <begin position="296"/>
        <end position="316"/>
    </location>
</feature>
<feature type="transmembrane region" description="Helical" evidence="2">
    <location>
        <begin position="318"/>
        <end position="338"/>
    </location>
</feature>
<feature type="domain" description="Cytochrome b5 heme-binding">
    <location>
        <begin position="1"/>
        <end position="71"/>
    </location>
</feature>
<feature type="splice variant" id="VSP_047786" description="In isoform c." evidence="10">
    <location>
        <begin position="1"/>
        <end position="366"/>
    </location>
</feature>
<feature type="splice variant" id="VSP_047787" description="In isoform b." evidence="10">
    <location>
        <begin position="1"/>
        <end position="258"/>
    </location>
</feature>
<feature type="mutagenesis site" description="In wa22; Impaired synaptic vesicle recycling characterized by a partially diffused localization of synaptic vesicle protein snb-1 along the dorsal nerve cord and the formation of enlarged synaptic vesicles. snb-1 diffused localization is increased in a unc-57 (ok310) mutant background but not in a unc-26 (s1710) mutant background. Severe depletion of unc-26 at release sites in the dorsal nerve cord and increased phosphatidylinositol 4,5-bisphosphate levels at release sites and at the axonal plasma membrane. Impaired locomotion." evidence="4">
    <original>S</original>
    <variation>F</variation>
    <location>
        <position position="186"/>
    </location>
</feature>
<feature type="sequence conflict" description="In Ref. 1; AAC15586." evidence="10" ref="1">
    <original>M</original>
    <variation>V</variation>
    <location>
        <position position="401"/>
    </location>
</feature>
<gene>
    <name type="primary">fat-3</name>
    <name type="ORF">W08D2.4</name>
</gene>
<sequence length="443" mass="51773">MVVDKNASGLRMKVDGKWLYLSEELVKKHPGGAVIEQYRNSDATHIFHAFHEGSSQAYKQLDLLKKHGEHDEFLEKQLEKRLDKVDINVSAYDVSVAQEKKMVESFEKLRQKLHDDGLMKANETYFLFKAISTLSIMAFAFYLQYLGWYITSACLLALAWQQFGWLTHEFCHQQPTKNRPLNDTISLFFGNFLQGFSRDWWKDKHNTHHAATNVIDHDGDIDLAPLFAFIPGDLCKYKASFEKAILKIVPYQHLYFTAMLPMLRFSWTGQSVQWVFKENQMEYKVYQRNAFWEQATIVGHWAWVFYQLFLLPTWPLRVAYFIISQMGGGLLIAHVVTFNHNSVDKYPANSRILNNFAALQILTTRNMTPSPFIDWLWGGLNYQIEHHLFPTMPRCNLNACMKYVKEWCKENNLPYLVDDYFDGYAMNLQQLKNMAEHIQAKAA</sequence>
<name>FAT3_CAEEL</name>
<organism>
    <name type="scientific">Caenorhabditis elegans</name>
    <dbReference type="NCBI Taxonomy" id="6239"/>
    <lineage>
        <taxon>Eukaryota</taxon>
        <taxon>Metazoa</taxon>
        <taxon>Ecdysozoa</taxon>
        <taxon>Nematoda</taxon>
        <taxon>Chromadorea</taxon>
        <taxon>Rhabditida</taxon>
        <taxon>Rhabditina</taxon>
        <taxon>Rhabditomorpha</taxon>
        <taxon>Rhabditoidea</taxon>
        <taxon>Rhabditidae</taxon>
        <taxon>Peloderinae</taxon>
        <taxon>Caenorhabditis</taxon>
    </lineage>
</organism>
<keyword id="KW-0025">Alternative splicing</keyword>
<keyword id="KW-0275">Fatty acid biosynthesis</keyword>
<keyword id="KW-0276">Fatty acid metabolism</keyword>
<keyword id="KW-0444">Lipid biosynthesis</keyword>
<keyword id="KW-0443">Lipid metabolism</keyword>
<keyword id="KW-0472">Membrane</keyword>
<keyword id="KW-0560">Oxidoreductase</keyword>
<keyword id="KW-1185">Reference proteome</keyword>
<keyword id="KW-0812">Transmembrane</keyword>
<keyword id="KW-1133">Transmembrane helix</keyword>
<protein>
    <recommendedName>
        <fullName evidence="7">Delta(6)-fatty-acid desaturase fat-3</fullName>
        <shortName evidence="7 8">FAT-3</shortName>
        <ecNumber evidence="3 6">1.14.19.3</ecNumber>
    </recommendedName>
    <alternativeName>
        <fullName evidence="9">Delta(6)-fatty-acid desaturase</fullName>
        <shortName evidence="9">Ceeld6</shortName>
    </alternativeName>
    <alternativeName>
        <fullName>Fatty acid desaturase 3</fullName>
    </alternativeName>
</protein>
<accession>Q23221</accession>
<accession>E9P867</accession>
<accession>E9P868</accession>
<accession>O61388</accession>
<reference key="1">
    <citation type="journal article" date="1998" name="Biochem. J.">
        <title>Identification of a caenorhabditis elegans Delta6-fatty-acid-desaturase by heterologous expression in saccharomyces cerevisiae.</title>
        <authorList>
            <person name="Napier J.A."/>
            <person name="Hey S.J."/>
            <person name="Lacey D.J."/>
            <person name="Shewry P.R."/>
        </authorList>
    </citation>
    <scope>NUCLEOTIDE SEQUENCE [MRNA] (ISOFORM A)</scope>
    <scope>FUNCTION</scope>
    <scope>CATALYTIC ACTIVITY</scope>
    <scope>PATHWAY</scope>
</reference>
<reference key="2">
    <citation type="journal article" date="1998" name="Science">
        <title>Genome sequence of the nematode C. elegans: a platform for investigating biology.</title>
        <authorList>
            <consortium name="The C. elegans sequencing consortium"/>
        </authorList>
    </citation>
    <scope>NUCLEOTIDE SEQUENCE [LARGE SCALE GENOMIC DNA]</scope>
    <source>
        <strain>Bristol N2</strain>
    </source>
</reference>
<reference key="3">
    <citation type="journal article" date="2002" name="Proc. Natl. Acad. Sci. U.S.A.">
        <title>Genetic dissection of polyunsaturated fatty acid synthesis in Caenorhabditis elegans.</title>
        <authorList>
            <person name="Watts J.L."/>
            <person name="Browse J."/>
        </authorList>
    </citation>
    <scope>FUNCTION</scope>
    <scope>CATALYTIC ACTIVITY</scope>
    <scope>PATHWAY</scope>
    <scope>DISRUPTION PHENOTYPE</scope>
</reference>
<reference key="4">
    <citation type="journal article" date="2008" name="Mol. Biol. Cell">
        <title>Polyunsaturated fatty acids influence synaptojanin localization to regulate synaptic vesicle recycling.</title>
        <authorList>
            <person name="Marza E."/>
            <person name="Long T."/>
            <person name="Saiardi A."/>
            <person name="Sumakovic M."/>
            <person name="Eimer S."/>
            <person name="Hall D.H."/>
            <person name="Lesa G.M."/>
        </authorList>
    </citation>
    <scope>FUNCTION</scope>
    <scope>DISRUPTION PHENOTYPE</scope>
    <scope>MUTAGENESIS OF SER-186</scope>
</reference>
<reference key="5">
    <citation type="journal article" date="2016" name="Biochim. Biophys. Acta">
        <title>The cytochrome b5 reductase HPO-19 is required for biosynthesis of polyunsaturated fatty acids in Caenorhabditis elegans.</title>
        <authorList>
            <person name="Zhang Y."/>
            <person name="Wang H."/>
            <person name="Zhang J."/>
            <person name="Hu Y."/>
            <person name="Zhang L."/>
            <person name="Wu X."/>
            <person name="Su X."/>
            <person name="Li T."/>
            <person name="Zou X."/>
            <person name="Liang B."/>
        </authorList>
    </citation>
    <scope>FUNCTION</scope>
</reference>
<dbReference type="EC" id="1.14.19.3" evidence="3 6"/>
<dbReference type="EMBL" id="AF031477">
    <property type="protein sequence ID" value="AAC15586.1"/>
    <property type="molecule type" value="mRNA"/>
</dbReference>
<dbReference type="EMBL" id="Z70271">
    <property type="protein sequence ID" value="CAA94233.2"/>
    <property type="molecule type" value="Genomic_DNA"/>
</dbReference>
<dbReference type="EMBL" id="Z70271">
    <property type="protein sequence ID" value="CBZ01799.1"/>
    <property type="molecule type" value="Genomic_DNA"/>
</dbReference>
<dbReference type="EMBL" id="Z70271">
    <property type="protein sequence ID" value="CBZ01800.1"/>
    <property type="molecule type" value="Genomic_DNA"/>
</dbReference>
<dbReference type="PIR" id="T26280">
    <property type="entry name" value="T26280"/>
</dbReference>
<dbReference type="RefSeq" id="NP_001255426.1">
    <molecule id="Q23221-1"/>
    <property type="nucleotide sequence ID" value="NM_001268497.2"/>
</dbReference>
<dbReference type="RefSeq" id="NP_001255427.1">
    <molecule id="Q23221-2"/>
    <property type="nucleotide sequence ID" value="NM_001268498.3"/>
</dbReference>
<dbReference type="RefSeq" id="NP_001255428.1">
    <molecule id="Q23221-3"/>
    <property type="nucleotide sequence ID" value="NM_001268499.3"/>
</dbReference>
<dbReference type="BioGRID" id="42924">
    <property type="interactions" value="1"/>
</dbReference>
<dbReference type="DIP" id="DIP-27071N"/>
<dbReference type="FunCoup" id="Q23221">
    <property type="interactions" value="930"/>
</dbReference>
<dbReference type="IntAct" id="Q23221">
    <property type="interactions" value="1"/>
</dbReference>
<dbReference type="STRING" id="6239.W08D2.4a.1"/>
<dbReference type="SwissLipids" id="SLP:000000267"/>
<dbReference type="PaxDb" id="6239-W08D2.4a"/>
<dbReference type="PeptideAtlas" id="Q23221"/>
<dbReference type="EnsemblMetazoa" id="W08D2.4a.1">
    <molecule id="Q23221-1"/>
    <property type="protein sequence ID" value="W08D2.4a.1"/>
    <property type="gene ID" value="WBGene00001395"/>
</dbReference>
<dbReference type="EnsemblMetazoa" id="W08D2.4b.1">
    <molecule id="Q23221-2"/>
    <property type="protein sequence ID" value="W08D2.4b.1"/>
    <property type="gene ID" value="WBGene00001395"/>
</dbReference>
<dbReference type="EnsemblMetazoa" id="W08D2.4c.1">
    <molecule id="Q23221-3"/>
    <property type="protein sequence ID" value="W08D2.4c.1"/>
    <property type="gene ID" value="WBGene00001395"/>
</dbReference>
<dbReference type="GeneID" id="177820"/>
<dbReference type="KEGG" id="cel:CELE_W08D2.4"/>
<dbReference type="AGR" id="WB:WBGene00001395"/>
<dbReference type="CTD" id="177820"/>
<dbReference type="WormBase" id="W08D2.4a">
    <molecule id="Q23221-1"/>
    <property type="protein sequence ID" value="CE25153"/>
    <property type="gene ID" value="WBGene00001395"/>
    <property type="gene designation" value="fat-3"/>
</dbReference>
<dbReference type="WormBase" id="W08D2.4b">
    <molecule id="Q23221-2"/>
    <property type="protein sequence ID" value="CE45719"/>
    <property type="gene ID" value="WBGene00001395"/>
    <property type="gene designation" value="fat-3"/>
</dbReference>
<dbReference type="WormBase" id="W08D2.4c">
    <molecule id="Q23221-3"/>
    <property type="protein sequence ID" value="CE45812"/>
    <property type="gene ID" value="WBGene00001395"/>
    <property type="gene designation" value="fat-3"/>
</dbReference>
<dbReference type="eggNOG" id="KOG4232">
    <property type="taxonomic scope" value="Eukaryota"/>
</dbReference>
<dbReference type="GeneTree" id="ENSGT00950000182990"/>
<dbReference type="HOGENOM" id="CLU_016265_1_1_1"/>
<dbReference type="InParanoid" id="Q23221"/>
<dbReference type="OMA" id="HWGMSTS"/>
<dbReference type="OrthoDB" id="260091at2759"/>
<dbReference type="PhylomeDB" id="Q23221"/>
<dbReference type="Reactome" id="R-CEL-2046105">
    <property type="pathway name" value="Linoleic acid (LA) metabolism"/>
</dbReference>
<dbReference type="Reactome" id="R-CEL-2046106">
    <property type="pathway name" value="alpha-linolenic acid (ALA) metabolism"/>
</dbReference>
<dbReference type="SignaLink" id="Q23221"/>
<dbReference type="UniPathway" id="UPA00658"/>
<dbReference type="PRO" id="PR:Q23221"/>
<dbReference type="Proteomes" id="UP000001940">
    <property type="component" value="Chromosome IV"/>
</dbReference>
<dbReference type="Bgee" id="WBGene00001395">
    <property type="expression patterns" value="Expressed in larva and 4 other cell types or tissues"/>
</dbReference>
<dbReference type="ExpressionAtlas" id="Q23221">
    <property type="expression patterns" value="baseline and differential"/>
</dbReference>
<dbReference type="GO" id="GO:0016020">
    <property type="term" value="C:membrane"/>
    <property type="evidence" value="ECO:0000305"/>
    <property type="project" value="WormBase"/>
</dbReference>
<dbReference type="GO" id="GO:0098793">
    <property type="term" value="C:presynapse"/>
    <property type="evidence" value="ECO:0007669"/>
    <property type="project" value="GOC"/>
</dbReference>
<dbReference type="GO" id="GO:0016213">
    <property type="term" value="F:acyl-CoA 6-desaturase activity"/>
    <property type="evidence" value="ECO:0007669"/>
    <property type="project" value="UniProtKB-EC"/>
</dbReference>
<dbReference type="GO" id="GO:0016717">
    <property type="term" value="F:oxidoreductase activity, acting on paired donors, with oxidation of a pair of donors resulting in the reduction of molecular oxygen to two molecules of water"/>
    <property type="evidence" value="ECO:0000318"/>
    <property type="project" value="GO_Central"/>
</dbReference>
<dbReference type="GO" id="GO:0004768">
    <property type="term" value="F:stearoyl-CoA 9-desaturase activity"/>
    <property type="evidence" value="ECO:0000314"/>
    <property type="project" value="WormBase"/>
</dbReference>
<dbReference type="GO" id="GO:0014055">
    <property type="term" value="P:acetylcholine secretion, neurotransmission"/>
    <property type="evidence" value="ECO:0000315"/>
    <property type="project" value="WormBase"/>
</dbReference>
<dbReference type="GO" id="GO:0040002">
    <property type="term" value="P:collagen and cuticulin-based cuticle development"/>
    <property type="evidence" value="ECO:0000315"/>
    <property type="project" value="WormBase"/>
</dbReference>
<dbReference type="GO" id="GO:0030421">
    <property type="term" value="P:defecation"/>
    <property type="evidence" value="ECO:0000315"/>
    <property type="project" value="WormBase"/>
</dbReference>
<dbReference type="GO" id="GO:0018991">
    <property type="term" value="P:egg-laying behavior"/>
    <property type="evidence" value="ECO:0000315"/>
    <property type="project" value="WormBase"/>
</dbReference>
<dbReference type="GO" id="GO:0032456">
    <property type="term" value="P:endocytic recycling"/>
    <property type="evidence" value="ECO:0000315"/>
    <property type="project" value="WormBase"/>
</dbReference>
<dbReference type="GO" id="GO:0006629">
    <property type="term" value="P:lipid metabolic process"/>
    <property type="evidence" value="ECO:0000318"/>
    <property type="project" value="GO_Central"/>
</dbReference>
<dbReference type="GO" id="GO:0040011">
    <property type="term" value="P:locomotion"/>
    <property type="evidence" value="ECO:0000315"/>
    <property type="project" value="WormBase"/>
</dbReference>
<dbReference type="GO" id="GO:0035264">
    <property type="term" value="P:multicellular organism growth"/>
    <property type="evidence" value="ECO:0000315"/>
    <property type="project" value="WormBase"/>
</dbReference>
<dbReference type="GO" id="GO:0006936">
    <property type="term" value="P:muscle contraction"/>
    <property type="evidence" value="ECO:0000315"/>
    <property type="project" value="WormBase"/>
</dbReference>
<dbReference type="GO" id="GO:0043050">
    <property type="term" value="P:nematode pharyngeal pumping"/>
    <property type="evidence" value="ECO:0000315"/>
    <property type="project" value="WormBase"/>
</dbReference>
<dbReference type="GO" id="GO:0008104">
    <property type="term" value="P:protein localization"/>
    <property type="evidence" value="ECO:0000315"/>
    <property type="project" value="WormBase"/>
</dbReference>
<dbReference type="GO" id="GO:0045088">
    <property type="term" value="P:regulation of innate immune response"/>
    <property type="evidence" value="ECO:0000315"/>
    <property type="project" value="WormBase"/>
</dbReference>
<dbReference type="GO" id="GO:0001820">
    <property type="term" value="P:serotonin secretion"/>
    <property type="evidence" value="ECO:0000315"/>
    <property type="project" value="WormBase"/>
</dbReference>
<dbReference type="GO" id="GO:0006636">
    <property type="term" value="P:unsaturated fatty acid biosynthetic process"/>
    <property type="evidence" value="ECO:0000315"/>
    <property type="project" value="WormBase"/>
</dbReference>
<dbReference type="CDD" id="cd03506">
    <property type="entry name" value="Delta6-FADS-like"/>
    <property type="match status" value="1"/>
</dbReference>
<dbReference type="Gene3D" id="3.10.120.10">
    <property type="entry name" value="Cytochrome b5-like heme/steroid binding domain"/>
    <property type="match status" value="1"/>
</dbReference>
<dbReference type="InterPro" id="IPR036400">
    <property type="entry name" value="Cyt_B5-like_heme/steroid_sf"/>
</dbReference>
<dbReference type="InterPro" id="IPR005804">
    <property type="entry name" value="FA_desaturase_dom"/>
</dbReference>
<dbReference type="InterPro" id="IPR012171">
    <property type="entry name" value="Fatty_acid_desaturase"/>
</dbReference>
<dbReference type="PANTHER" id="PTHR19353:SF83">
    <property type="entry name" value="DELTA(6)-FATTY-ACID DESATURASE FAT-3"/>
    <property type="match status" value="1"/>
</dbReference>
<dbReference type="PANTHER" id="PTHR19353">
    <property type="entry name" value="FATTY ACID DESATURASE 2"/>
    <property type="match status" value="1"/>
</dbReference>
<dbReference type="Pfam" id="PF00487">
    <property type="entry name" value="FA_desaturase"/>
    <property type="match status" value="1"/>
</dbReference>
<dbReference type="PIRSF" id="PIRSF015921">
    <property type="entry name" value="FA_sphinglp_des"/>
    <property type="match status" value="1"/>
</dbReference>
<dbReference type="SUPFAM" id="SSF55856">
    <property type="entry name" value="Cytochrome b5-like heme/steroid binding domain"/>
    <property type="match status" value="1"/>
</dbReference>